<reference key="1">
    <citation type="submission" date="2009-07" db="EMBL/GenBank/DDBJ databases">
        <title>Complete sequence of Pectobacterium carotovorum subsp. carotovorum PC1.</title>
        <authorList>
            <consortium name="US DOE Joint Genome Institute"/>
            <person name="Lucas S."/>
            <person name="Copeland A."/>
            <person name="Lapidus A."/>
            <person name="Glavina del Rio T."/>
            <person name="Tice H."/>
            <person name="Bruce D."/>
            <person name="Goodwin L."/>
            <person name="Pitluck S."/>
            <person name="Munk A.C."/>
            <person name="Brettin T."/>
            <person name="Detter J.C."/>
            <person name="Han C."/>
            <person name="Tapia R."/>
            <person name="Larimer F."/>
            <person name="Land M."/>
            <person name="Hauser L."/>
            <person name="Kyrpides N."/>
            <person name="Mikhailova N."/>
            <person name="Balakrishnan V."/>
            <person name="Glasner J."/>
            <person name="Perna N.T."/>
        </authorList>
    </citation>
    <scope>NUCLEOTIDE SEQUENCE [LARGE SCALE GENOMIC DNA]</scope>
    <source>
        <strain>PC1</strain>
    </source>
</reference>
<organism>
    <name type="scientific">Pectobacterium carotovorum subsp. carotovorum (strain PC1)</name>
    <dbReference type="NCBI Taxonomy" id="561230"/>
    <lineage>
        <taxon>Bacteria</taxon>
        <taxon>Pseudomonadati</taxon>
        <taxon>Pseudomonadota</taxon>
        <taxon>Gammaproteobacteria</taxon>
        <taxon>Enterobacterales</taxon>
        <taxon>Pectobacteriaceae</taxon>
        <taxon>Pectobacterium</taxon>
    </lineage>
</organism>
<dbReference type="EMBL" id="CP001657">
    <property type="protein sequence ID" value="ACT12552.1"/>
    <property type="molecule type" value="Genomic_DNA"/>
</dbReference>
<dbReference type="RefSeq" id="WP_015839778.1">
    <property type="nucleotide sequence ID" value="NC_012917.1"/>
</dbReference>
<dbReference type="SMR" id="C6DDU0"/>
<dbReference type="STRING" id="561230.PC1_1509"/>
<dbReference type="GeneID" id="67793539"/>
<dbReference type="KEGG" id="pct:PC1_1509"/>
<dbReference type="eggNOG" id="COG0556">
    <property type="taxonomic scope" value="Bacteria"/>
</dbReference>
<dbReference type="HOGENOM" id="CLU_009621_2_1_6"/>
<dbReference type="OrthoDB" id="9806651at2"/>
<dbReference type="Proteomes" id="UP000002736">
    <property type="component" value="Chromosome"/>
</dbReference>
<dbReference type="GO" id="GO:0005737">
    <property type="term" value="C:cytoplasm"/>
    <property type="evidence" value="ECO:0007669"/>
    <property type="project" value="UniProtKB-SubCell"/>
</dbReference>
<dbReference type="GO" id="GO:0009380">
    <property type="term" value="C:excinuclease repair complex"/>
    <property type="evidence" value="ECO:0007669"/>
    <property type="project" value="InterPro"/>
</dbReference>
<dbReference type="GO" id="GO:0005524">
    <property type="term" value="F:ATP binding"/>
    <property type="evidence" value="ECO:0007669"/>
    <property type="project" value="UniProtKB-UniRule"/>
</dbReference>
<dbReference type="GO" id="GO:0016887">
    <property type="term" value="F:ATP hydrolysis activity"/>
    <property type="evidence" value="ECO:0007669"/>
    <property type="project" value="InterPro"/>
</dbReference>
<dbReference type="GO" id="GO:0003677">
    <property type="term" value="F:DNA binding"/>
    <property type="evidence" value="ECO:0007669"/>
    <property type="project" value="UniProtKB-UniRule"/>
</dbReference>
<dbReference type="GO" id="GO:0009381">
    <property type="term" value="F:excinuclease ABC activity"/>
    <property type="evidence" value="ECO:0007669"/>
    <property type="project" value="UniProtKB-UniRule"/>
</dbReference>
<dbReference type="GO" id="GO:0004386">
    <property type="term" value="F:helicase activity"/>
    <property type="evidence" value="ECO:0007669"/>
    <property type="project" value="UniProtKB-KW"/>
</dbReference>
<dbReference type="GO" id="GO:0006289">
    <property type="term" value="P:nucleotide-excision repair"/>
    <property type="evidence" value="ECO:0007669"/>
    <property type="project" value="UniProtKB-UniRule"/>
</dbReference>
<dbReference type="GO" id="GO:0009432">
    <property type="term" value="P:SOS response"/>
    <property type="evidence" value="ECO:0007669"/>
    <property type="project" value="UniProtKB-UniRule"/>
</dbReference>
<dbReference type="CDD" id="cd17916">
    <property type="entry name" value="DEXHc_UvrB"/>
    <property type="match status" value="1"/>
</dbReference>
<dbReference type="CDD" id="cd18790">
    <property type="entry name" value="SF2_C_UvrB"/>
    <property type="match status" value="1"/>
</dbReference>
<dbReference type="FunFam" id="3.40.50.300:FF:000257">
    <property type="entry name" value="UvrABC system protein B"/>
    <property type="match status" value="1"/>
</dbReference>
<dbReference type="FunFam" id="3.40.50.300:FF:000401">
    <property type="entry name" value="UvrABC system protein B"/>
    <property type="match status" value="1"/>
</dbReference>
<dbReference type="FunFam" id="3.40.50.300:FF:000477">
    <property type="entry name" value="UvrABC system protein B"/>
    <property type="match status" value="1"/>
</dbReference>
<dbReference type="Gene3D" id="3.40.50.300">
    <property type="entry name" value="P-loop containing nucleotide triphosphate hydrolases"/>
    <property type="match status" value="3"/>
</dbReference>
<dbReference type="Gene3D" id="4.10.860.10">
    <property type="entry name" value="UVR domain"/>
    <property type="match status" value="1"/>
</dbReference>
<dbReference type="HAMAP" id="MF_00204">
    <property type="entry name" value="UvrB"/>
    <property type="match status" value="1"/>
</dbReference>
<dbReference type="InterPro" id="IPR006935">
    <property type="entry name" value="Helicase/UvrB_N"/>
</dbReference>
<dbReference type="InterPro" id="IPR014001">
    <property type="entry name" value="Helicase_ATP-bd"/>
</dbReference>
<dbReference type="InterPro" id="IPR001650">
    <property type="entry name" value="Helicase_C-like"/>
</dbReference>
<dbReference type="InterPro" id="IPR027417">
    <property type="entry name" value="P-loop_NTPase"/>
</dbReference>
<dbReference type="InterPro" id="IPR001943">
    <property type="entry name" value="UVR_dom"/>
</dbReference>
<dbReference type="InterPro" id="IPR036876">
    <property type="entry name" value="UVR_dom_sf"/>
</dbReference>
<dbReference type="InterPro" id="IPR004807">
    <property type="entry name" value="UvrB"/>
</dbReference>
<dbReference type="InterPro" id="IPR041471">
    <property type="entry name" value="UvrB_inter"/>
</dbReference>
<dbReference type="InterPro" id="IPR024759">
    <property type="entry name" value="UvrB_YAD/RRR_dom"/>
</dbReference>
<dbReference type="NCBIfam" id="NF003673">
    <property type="entry name" value="PRK05298.1"/>
    <property type="match status" value="1"/>
</dbReference>
<dbReference type="NCBIfam" id="TIGR00631">
    <property type="entry name" value="uvrb"/>
    <property type="match status" value="1"/>
</dbReference>
<dbReference type="PANTHER" id="PTHR24029">
    <property type="entry name" value="UVRABC SYSTEM PROTEIN B"/>
    <property type="match status" value="1"/>
</dbReference>
<dbReference type="PANTHER" id="PTHR24029:SF0">
    <property type="entry name" value="UVRABC SYSTEM PROTEIN B"/>
    <property type="match status" value="1"/>
</dbReference>
<dbReference type="Pfam" id="PF00271">
    <property type="entry name" value="Helicase_C"/>
    <property type="match status" value="1"/>
</dbReference>
<dbReference type="Pfam" id="PF04851">
    <property type="entry name" value="ResIII"/>
    <property type="match status" value="1"/>
</dbReference>
<dbReference type="Pfam" id="PF02151">
    <property type="entry name" value="UVR"/>
    <property type="match status" value="1"/>
</dbReference>
<dbReference type="Pfam" id="PF12344">
    <property type="entry name" value="UvrB"/>
    <property type="match status" value="1"/>
</dbReference>
<dbReference type="Pfam" id="PF17757">
    <property type="entry name" value="UvrB_inter"/>
    <property type="match status" value="1"/>
</dbReference>
<dbReference type="SMART" id="SM00487">
    <property type="entry name" value="DEXDc"/>
    <property type="match status" value="1"/>
</dbReference>
<dbReference type="SMART" id="SM00490">
    <property type="entry name" value="HELICc"/>
    <property type="match status" value="1"/>
</dbReference>
<dbReference type="SUPFAM" id="SSF46600">
    <property type="entry name" value="C-terminal UvrC-binding domain of UvrB"/>
    <property type="match status" value="1"/>
</dbReference>
<dbReference type="SUPFAM" id="SSF52540">
    <property type="entry name" value="P-loop containing nucleoside triphosphate hydrolases"/>
    <property type="match status" value="2"/>
</dbReference>
<dbReference type="PROSITE" id="PS51192">
    <property type="entry name" value="HELICASE_ATP_BIND_1"/>
    <property type="match status" value="1"/>
</dbReference>
<dbReference type="PROSITE" id="PS51194">
    <property type="entry name" value="HELICASE_CTER"/>
    <property type="match status" value="1"/>
</dbReference>
<dbReference type="PROSITE" id="PS50151">
    <property type="entry name" value="UVR"/>
    <property type="match status" value="1"/>
</dbReference>
<accession>C6DDU0</accession>
<evidence type="ECO:0000255" key="1">
    <source>
        <dbReference type="HAMAP-Rule" id="MF_00204"/>
    </source>
</evidence>
<comment type="function">
    <text evidence="1">The UvrABC repair system catalyzes the recognition and processing of DNA lesions. A damage recognition complex composed of 2 UvrA and 2 UvrB subunits scans DNA for abnormalities. Upon binding of the UvrA(2)B(2) complex to a putative damaged site, the DNA wraps around one UvrB monomer. DNA wrap is dependent on ATP binding by UvrB and probably causes local melting of the DNA helix, facilitating insertion of UvrB beta-hairpin between the DNA strands. Then UvrB probes one DNA strand for the presence of a lesion. If a lesion is found the UvrA subunits dissociate and the UvrB-DNA preincision complex is formed. This complex is subsequently bound by UvrC and the second UvrB is released. If no lesion is found, the DNA wraps around the other UvrB subunit that will check the other stand for damage.</text>
</comment>
<comment type="subunit">
    <text evidence="1">Forms a heterotetramer with UvrA during the search for lesions. Interacts with UvrC in an incision complex.</text>
</comment>
<comment type="subcellular location">
    <subcellularLocation>
        <location evidence="1">Cytoplasm</location>
    </subcellularLocation>
</comment>
<comment type="domain">
    <text evidence="1">The beta-hairpin motif is involved in DNA binding.</text>
</comment>
<comment type="similarity">
    <text evidence="1">Belongs to the UvrB family.</text>
</comment>
<keyword id="KW-0067">ATP-binding</keyword>
<keyword id="KW-0963">Cytoplasm</keyword>
<keyword id="KW-0227">DNA damage</keyword>
<keyword id="KW-0228">DNA excision</keyword>
<keyword id="KW-0234">DNA repair</keyword>
<keyword id="KW-0267">Excision nuclease</keyword>
<keyword id="KW-0347">Helicase</keyword>
<keyword id="KW-0378">Hydrolase</keyword>
<keyword id="KW-0547">Nucleotide-binding</keyword>
<keyword id="KW-0742">SOS response</keyword>
<proteinExistence type="inferred from homology"/>
<protein>
    <recommendedName>
        <fullName evidence="1">UvrABC system protein B</fullName>
        <shortName evidence="1">Protein UvrB</shortName>
    </recommendedName>
    <alternativeName>
        <fullName evidence="1">Excinuclease ABC subunit B</fullName>
    </alternativeName>
</protein>
<gene>
    <name evidence="1" type="primary">uvrB</name>
    <name type="ordered locus">PC1_1509</name>
</gene>
<sequence>MSKVFTLNSDFKPAGDQPEAIRRLKEGLEDGLAHQTLLGVTGSGKTFTIANVIADLNRPTMMLAPNKTLAAQLYGEMKEFFPDNAVEYFVSYYDYYQPEAYVPSSDTFIEKDASVNEHIEQMRLSATKALLERRDVIVVASVSAIYGLGDPDLYLKMMLHLTQGMLIDQRAILRRLAELQYSRNDQAFQRGTFRVRGEVIDIFPAESDEIALRVELFDEEVERLSLFDPLTGHVLQTVPRYTIYPKTHYVTPRERILQAMEDIKVELADRRKVLLANDKLVEEQRLSQRTQFDLEMMNELGYCSGIENYSRYLSGRGPGEPPPTLFDYLPADGLLVIDESHVTVPQIGGMYRGDRARKETLVEYGFRLPSALDNRPMKFEEFEALAPQTIYVSATPGNYELEKSGGEVIDQVVRPTGLLDPLIEVRPVATQVDDLLSEIRQRAAVNERVLVTTLTKRMAEDLTEYLEEHGERVRYLHSDIDTVERVEIIRDLRLGEFDVLVGINLLREGLDMPEVSLVAILDADKEGFLRSERSLIQTIGRAARNLRGKAILYGDKITPSMAKAIGETERRREKQEAYNTEHGIVPQGLNKKISDILQLGQPTNRGKGRGNRKAAEPAARYELMTPKALELKIRELESKMLTHAQNLEFEEAAALRDELQALRAQFIAAS</sequence>
<name>UVRB_PECCP</name>
<feature type="chain" id="PRO_1000204138" description="UvrABC system protein B">
    <location>
        <begin position="1"/>
        <end position="670"/>
    </location>
</feature>
<feature type="domain" description="Helicase ATP-binding" evidence="1">
    <location>
        <begin position="26"/>
        <end position="183"/>
    </location>
</feature>
<feature type="domain" description="Helicase C-terminal" evidence="1">
    <location>
        <begin position="431"/>
        <end position="597"/>
    </location>
</feature>
<feature type="domain" description="UVR" evidence="1">
    <location>
        <begin position="630"/>
        <end position="665"/>
    </location>
</feature>
<feature type="short sequence motif" description="Beta-hairpin">
    <location>
        <begin position="92"/>
        <end position="115"/>
    </location>
</feature>
<feature type="binding site" evidence="1">
    <location>
        <begin position="39"/>
        <end position="46"/>
    </location>
    <ligand>
        <name>ATP</name>
        <dbReference type="ChEBI" id="CHEBI:30616"/>
    </ligand>
</feature>